<reference key="1">
    <citation type="submission" date="2006-05" db="EMBL/GenBank/DDBJ databases">
        <authorList>
            <consortium name="Genoscope"/>
        </authorList>
    </citation>
    <scope>NUCLEOTIDE SEQUENCE [LARGE SCALE GENOMIC DNA]</scope>
    <source>
        <strain>RCC307</strain>
    </source>
</reference>
<feature type="chain" id="PRO_1000052946" description="Cytochrome b6-f complex iron-sulfur subunit">
    <location>
        <begin position="1"/>
        <end position="178"/>
    </location>
</feature>
<feature type="transmembrane region" description="Helical" evidence="1">
    <location>
        <begin position="20"/>
        <end position="42"/>
    </location>
</feature>
<feature type="domain" description="Rieske" evidence="1">
    <location>
        <begin position="65"/>
        <end position="161"/>
    </location>
</feature>
<feature type="binding site" evidence="1">
    <location>
        <position position="107"/>
    </location>
    <ligand>
        <name>[2Fe-2S] cluster</name>
        <dbReference type="ChEBI" id="CHEBI:190135"/>
    </ligand>
</feature>
<feature type="binding site" evidence="1">
    <location>
        <position position="109"/>
    </location>
    <ligand>
        <name>[2Fe-2S] cluster</name>
        <dbReference type="ChEBI" id="CHEBI:190135"/>
    </ligand>
</feature>
<feature type="binding site" evidence="1">
    <location>
        <position position="125"/>
    </location>
    <ligand>
        <name>[2Fe-2S] cluster</name>
        <dbReference type="ChEBI" id="CHEBI:190135"/>
    </ligand>
</feature>
<feature type="binding site" evidence="1">
    <location>
        <position position="128"/>
    </location>
    <ligand>
        <name>[2Fe-2S] cluster</name>
        <dbReference type="ChEBI" id="CHEBI:190135"/>
    </ligand>
</feature>
<feature type="disulfide bond" evidence="1">
    <location>
        <begin position="112"/>
        <end position="127"/>
    </location>
</feature>
<accession>A5GRU8</accession>
<proteinExistence type="inferred from homology"/>
<name>UCRI_SYNR3</name>
<gene>
    <name evidence="1" type="primary">petC</name>
    <name type="ordered locus">SynRCC307_0704</name>
</gene>
<dbReference type="EC" id="7.1.1.6" evidence="1"/>
<dbReference type="EMBL" id="CT978603">
    <property type="protein sequence ID" value="CAK27607.1"/>
    <property type="molecule type" value="Genomic_DNA"/>
</dbReference>
<dbReference type="SMR" id="A5GRU8"/>
<dbReference type="STRING" id="316278.SynRCC307_0704"/>
<dbReference type="KEGG" id="syr:SynRCC307_0704"/>
<dbReference type="eggNOG" id="COG0723">
    <property type="taxonomic scope" value="Bacteria"/>
</dbReference>
<dbReference type="HOGENOM" id="CLU_055690_8_0_3"/>
<dbReference type="OrthoDB" id="9767869at2"/>
<dbReference type="Proteomes" id="UP000001115">
    <property type="component" value="Chromosome"/>
</dbReference>
<dbReference type="GO" id="GO:0031676">
    <property type="term" value="C:plasma membrane-derived thylakoid membrane"/>
    <property type="evidence" value="ECO:0007669"/>
    <property type="project" value="UniProtKB-SubCell"/>
</dbReference>
<dbReference type="GO" id="GO:0051537">
    <property type="term" value="F:2 iron, 2 sulfur cluster binding"/>
    <property type="evidence" value="ECO:0007669"/>
    <property type="project" value="UniProtKB-KW"/>
</dbReference>
<dbReference type="GO" id="GO:0045158">
    <property type="term" value="F:electron transporter, transferring electrons within cytochrome b6/f complex of photosystem II activity"/>
    <property type="evidence" value="ECO:0007669"/>
    <property type="project" value="UniProtKB-UniRule"/>
</dbReference>
<dbReference type="GO" id="GO:0046872">
    <property type="term" value="F:metal ion binding"/>
    <property type="evidence" value="ECO:0007669"/>
    <property type="project" value="UniProtKB-KW"/>
</dbReference>
<dbReference type="GO" id="GO:0004497">
    <property type="term" value="F:monooxygenase activity"/>
    <property type="evidence" value="ECO:0007669"/>
    <property type="project" value="UniProtKB-ARBA"/>
</dbReference>
<dbReference type="GO" id="GO:0016705">
    <property type="term" value="F:oxidoreductase activity, acting on paired donors, with incorporation or reduction of molecular oxygen"/>
    <property type="evidence" value="ECO:0007669"/>
    <property type="project" value="UniProtKB-ARBA"/>
</dbReference>
<dbReference type="GO" id="GO:0009496">
    <property type="term" value="F:plastoquinol--plastocyanin reductase activity"/>
    <property type="evidence" value="ECO:0007669"/>
    <property type="project" value="UniProtKB-UniRule"/>
</dbReference>
<dbReference type="GO" id="GO:0015979">
    <property type="term" value="P:photosynthesis"/>
    <property type="evidence" value="ECO:0007669"/>
    <property type="project" value="UniProtKB-UniRule"/>
</dbReference>
<dbReference type="CDD" id="cd03471">
    <property type="entry name" value="Rieske_cytochrome_b6f"/>
    <property type="match status" value="1"/>
</dbReference>
<dbReference type="FunFam" id="2.102.10.10:FF:000007">
    <property type="entry name" value="Cytochrome b6-f complex iron-sulfur subunit"/>
    <property type="match status" value="1"/>
</dbReference>
<dbReference type="Gene3D" id="2.102.10.10">
    <property type="entry name" value="Rieske [2Fe-2S] iron-sulphur domain"/>
    <property type="match status" value="1"/>
</dbReference>
<dbReference type="Gene3D" id="1.20.5.700">
    <property type="entry name" value="Single helix bin"/>
    <property type="match status" value="1"/>
</dbReference>
<dbReference type="HAMAP" id="MF_01335">
    <property type="entry name" value="Cytb6_f_Rieske"/>
    <property type="match status" value="1"/>
</dbReference>
<dbReference type="InterPro" id="IPR023960">
    <property type="entry name" value="Cyt_b6_f_Rieske"/>
</dbReference>
<dbReference type="InterPro" id="IPR017941">
    <property type="entry name" value="Rieske_2Fe-2S"/>
</dbReference>
<dbReference type="InterPro" id="IPR036922">
    <property type="entry name" value="Rieske_2Fe-2S_sf"/>
</dbReference>
<dbReference type="InterPro" id="IPR014349">
    <property type="entry name" value="Rieske_Fe-S_prot"/>
</dbReference>
<dbReference type="InterPro" id="IPR005805">
    <property type="entry name" value="Rieske_Fe-S_prot_C"/>
</dbReference>
<dbReference type="NCBIfam" id="NF045928">
    <property type="entry name" value="Cytb6fFeSPetC"/>
    <property type="match status" value="1"/>
</dbReference>
<dbReference type="NCBIfam" id="NF010001">
    <property type="entry name" value="PRK13474.1"/>
    <property type="match status" value="1"/>
</dbReference>
<dbReference type="PANTHER" id="PTHR10134">
    <property type="entry name" value="CYTOCHROME B-C1 COMPLEX SUBUNIT RIESKE, MITOCHONDRIAL"/>
    <property type="match status" value="1"/>
</dbReference>
<dbReference type="Pfam" id="PF00355">
    <property type="entry name" value="Rieske"/>
    <property type="match status" value="1"/>
</dbReference>
<dbReference type="Pfam" id="PF25471">
    <property type="entry name" value="TM_PetC"/>
    <property type="match status" value="1"/>
</dbReference>
<dbReference type="PRINTS" id="PR00162">
    <property type="entry name" value="RIESKE"/>
</dbReference>
<dbReference type="SUPFAM" id="SSF50022">
    <property type="entry name" value="ISP domain"/>
    <property type="match status" value="1"/>
</dbReference>
<dbReference type="PROSITE" id="PS51296">
    <property type="entry name" value="RIESKE"/>
    <property type="match status" value="1"/>
</dbReference>
<organism>
    <name type="scientific">Synechococcus sp. (strain RCC307)</name>
    <dbReference type="NCBI Taxonomy" id="316278"/>
    <lineage>
        <taxon>Bacteria</taxon>
        <taxon>Bacillati</taxon>
        <taxon>Cyanobacteriota</taxon>
        <taxon>Cyanophyceae</taxon>
        <taxon>Synechococcales</taxon>
        <taxon>Synechococcaceae</taxon>
        <taxon>Synechococcus</taxon>
    </lineage>
</organism>
<sequence>MTQISAKDVPGMGRRQFMNLLTFGSVTGVALGALYPVVNYFIPPKASGAGGGTTAKDELGNDVTASGWLADHKEGDRSLVQGLKGDPTYLIVDGPDSIGDYGINAICTHLGCVVPWNAGANKFMCPCHGSQYDATGKVVRGPAPLSLALAHVNVENDNVFVSQWSETDFRTDEKPWWA</sequence>
<keyword id="KW-0001">2Fe-2S</keyword>
<keyword id="KW-1015">Disulfide bond</keyword>
<keyword id="KW-0249">Electron transport</keyword>
<keyword id="KW-0408">Iron</keyword>
<keyword id="KW-0411">Iron-sulfur</keyword>
<keyword id="KW-0472">Membrane</keyword>
<keyword id="KW-0479">Metal-binding</keyword>
<keyword id="KW-1185">Reference proteome</keyword>
<keyword id="KW-0793">Thylakoid</keyword>
<keyword id="KW-1278">Translocase</keyword>
<keyword id="KW-0812">Transmembrane</keyword>
<keyword id="KW-1133">Transmembrane helix</keyword>
<keyword id="KW-0813">Transport</keyword>
<protein>
    <recommendedName>
        <fullName evidence="1">Cytochrome b6-f complex iron-sulfur subunit</fullName>
        <ecNumber evidence="1">7.1.1.6</ecNumber>
    </recommendedName>
    <alternativeName>
        <fullName evidence="1">Plastohydroquinone:plastocyanin oxidoreductase iron-sulfur protein</fullName>
        <shortName evidence="1">ISP</shortName>
        <shortName evidence="1">RISP</shortName>
    </alternativeName>
    <alternativeName>
        <fullName evidence="1">Rieske iron-sulfur protein</fullName>
    </alternativeName>
</protein>
<comment type="function">
    <text evidence="1">Component of the cytochrome b6-f complex, which mediates electron transfer between photosystem II (PSII) and photosystem I (PSI), cyclic electron flow around PSI, and state transitions.</text>
</comment>
<comment type="catalytic activity">
    <reaction evidence="1">
        <text>2 oxidized [plastocyanin] + a plastoquinol + 2 H(+)(in) = 2 reduced [plastocyanin] + a plastoquinone + 4 H(+)(out)</text>
        <dbReference type="Rhea" id="RHEA:22148"/>
        <dbReference type="Rhea" id="RHEA-COMP:9561"/>
        <dbReference type="Rhea" id="RHEA-COMP:9562"/>
        <dbReference type="Rhea" id="RHEA-COMP:10039"/>
        <dbReference type="Rhea" id="RHEA-COMP:10040"/>
        <dbReference type="ChEBI" id="CHEBI:15378"/>
        <dbReference type="ChEBI" id="CHEBI:17757"/>
        <dbReference type="ChEBI" id="CHEBI:29036"/>
        <dbReference type="ChEBI" id="CHEBI:49552"/>
        <dbReference type="ChEBI" id="CHEBI:62192"/>
        <dbReference type="EC" id="7.1.1.6"/>
    </reaction>
</comment>
<comment type="cofactor">
    <cofactor evidence="1">
        <name>[2Fe-2S] cluster</name>
        <dbReference type="ChEBI" id="CHEBI:190135"/>
    </cofactor>
    <text evidence="1">Binds 1 [2Fe-2S] cluster per subunit.</text>
</comment>
<comment type="subunit">
    <text evidence="1">The 4 large subunits of the cytochrome b6-f complex are cytochrome b6, subunit IV (17 kDa polypeptide, PetD), cytochrome f and the Rieske protein, while the 4 small subunits are PetG, PetL, PetM and PetN. The complex functions as a dimer.</text>
</comment>
<comment type="subcellular location">
    <subcellularLocation>
        <location evidence="1">Cellular thylakoid membrane</location>
        <topology evidence="1">Single-pass membrane protein</topology>
    </subcellularLocation>
    <text evidence="1">The transmembrane helix obliquely spans the membrane in one monomer, and its extrinsic C-terminal domain is part of the other monomer.</text>
</comment>
<comment type="miscellaneous">
    <text>The Rieske iron-sulfur protein is a high potential 2Fe-2S protein.</text>
</comment>
<comment type="similarity">
    <text evidence="1">Belongs to the Rieske iron-sulfur protein family.</text>
</comment>
<evidence type="ECO:0000255" key="1">
    <source>
        <dbReference type="HAMAP-Rule" id="MF_01335"/>
    </source>
</evidence>